<organism>
    <name type="scientific">Neisseria meningitidis serogroup B / serotype 15 (strain H44/76)</name>
    <dbReference type="NCBI Taxonomy" id="909420"/>
    <lineage>
        <taxon>Bacteria</taxon>
        <taxon>Pseudomonadati</taxon>
        <taxon>Pseudomonadota</taxon>
        <taxon>Betaproteobacteria</taxon>
        <taxon>Neisseriales</taxon>
        <taxon>Neisseriaceae</taxon>
        <taxon>Neisseria</taxon>
    </lineage>
</organism>
<evidence type="ECO:0000250" key="1"/>
<evidence type="ECO:0000255" key="2"/>
<evidence type="ECO:0000269" key="3">
    <source>
    </source>
</evidence>
<evidence type="ECO:0000305" key="4"/>
<feature type="chain" id="PRO_0000411117" description="Pimeloyl-[acyl-carrier protein] methyl ester esterase">
    <location>
        <begin position="1"/>
        <end position="258"/>
    </location>
</feature>
<feature type="domain" description="AB hydrolase-1" evidence="2">
    <location>
        <begin position="17"/>
        <end position="241"/>
    </location>
</feature>
<feature type="active site" description="Nucleophile" evidence="1">
    <location>
        <position position="83"/>
    </location>
</feature>
<feature type="active site" evidence="1">
    <location>
        <position position="207"/>
    </location>
</feature>
<feature type="active site" evidence="1">
    <location>
        <position position="235"/>
    </location>
</feature>
<feature type="binding site" evidence="1">
    <location>
        <position position="23"/>
    </location>
    <ligand>
        <name>substrate</name>
    </ligand>
</feature>
<feature type="binding site" evidence="1">
    <location>
        <begin position="83"/>
        <end position="84"/>
    </location>
    <ligand>
        <name>substrate</name>
    </ligand>
</feature>
<feature type="binding site" evidence="1">
    <location>
        <begin position="145"/>
        <end position="149"/>
    </location>
    <ligand>
        <name>substrate</name>
    </ligand>
</feature>
<feature type="binding site" evidence="1">
    <location>
        <position position="235"/>
    </location>
    <ligand>
        <name>substrate</name>
    </ligand>
</feature>
<proteinExistence type="evidence at protein level"/>
<reference key="1">
    <citation type="journal article" date="2011" name="J. Bacteriol.">
        <title>Genome sequence of Neisseria meningitidis serogroup B strain H44/76.</title>
        <authorList>
            <person name="Piet J.R."/>
            <person name="Huis In 't Veld R.A."/>
            <person name="van Schaik B.D."/>
            <person name="van Kampen A.H."/>
            <person name="Baas F."/>
            <person name="van de Beek D."/>
            <person name="Pannekoek Y."/>
            <person name="van der Ende A."/>
        </authorList>
    </citation>
    <scope>NUCLEOTIDE SEQUENCE [LARGE SCALE GENOMIC DNA]</scope>
    <source>
        <strain>H44/76</strain>
    </source>
</reference>
<reference key="2">
    <citation type="journal article" date="2011" name="Proc. Natl. Acad. Sci. U.S.A.">
        <title>Neisseria meningitidis is structured in clades associated with restriction modification systems that modulate homologous recombination.</title>
        <authorList>
            <person name="Budroni S."/>
            <person name="Siena E."/>
            <person name="Hotopp J.C."/>
            <person name="Seib K.L."/>
            <person name="Serruto D."/>
            <person name="Nofroni C."/>
            <person name="Comanducci M."/>
            <person name="Riley D.R."/>
            <person name="Daugherty S.C."/>
            <person name="Angiuoli S.V."/>
            <person name="Covacci A."/>
            <person name="Pizza M."/>
            <person name="Rappuoli R."/>
            <person name="Moxon E.R."/>
            <person name="Tettelin H."/>
            <person name="Medini D."/>
        </authorList>
    </citation>
    <scope>NUCLEOTIDE SEQUENCE [LARGE SCALE GENOMIC DNA]</scope>
    <source>
        <strain>H44/76</strain>
    </source>
</reference>
<reference key="3">
    <citation type="journal article" date="2002" name="FEBS Lett.">
        <title>Purification and characterisation of the BIOH protein from the biotin biosynthetic pathway.</title>
        <authorList>
            <person name="Tomczyk N.H."/>
            <person name="Nettleship J.E."/>
            <person name="Baxter R.L."/>
            <person name="Crichton H.J."/>
            <person name="Webster S.P."/>
            <person name="Campopiano D.J."/>
        </authorList>
    </citation>
    <scope>ROLE IN BIOTIN BIOSYNTHESIS</scope>
    <scope>BINDING TO COA</scope>
    <scope>SUBUNIT</scope>
    <source>
        <strain>H44/76</strain>
    </source>
</reference>
<accession>E6MWF8</accession>
<dbReference type="EC" id="3.1.1.85"/>
<dbReference type="EMBL" id="AEQZ01000016">
    <property type="protein sequence ID" value="EFV64152.1"/>
    <property type="status" value="ALT_INIT"/>
    <property type="molecule type" value="Genomic_DNA"/>
</dbReference>
<dbReference type="EMBL" id="CP002420">
    <property type="protein sequence ID" value="ADY94928.1"/>
    <property type="status" value="ALT_INIT"/>
    <property type="molecule type" value="Genomic_DNA"/>
</dbReference>
<dbReference type="SMR" id="E6MWF8"/>
<dbReference type="ESTHER" id="neime-NMA2216">
    <property type="family name" value="BioH"/>
</dbReference>
<dbReference type="KEGG" id="nmh:NMBH4476_0264"/>
<dbReference type="PATRIC" id="fig|909420.3.peg.336"/>
<dbReference type="HOGENOM" id="CLU_020336_12_2_4"/>
<dbReference type="UniPathway" id="UPA00078"/>
<dbReference type="Proteomes" id="UP000032707">
    <property type="component" value="Unassembled WGS sequence"/>
</dbReference>
<dbReference type="GO" id="GO:0005737">
    <property type="term" value="C:cytoplasm"/>
    <property type="evidence" value="ECO:0007669"/>
    <property type="project" value="UniProtKB-SubCell"/>
</dbReference>
<dbReference type="GO" id="GO:0016020">
    <property type="term" value="C:membrane"/>
    <property type="evidence" value="ECO:0007669"/>
    <property type="project" value="TreeGrafter"/>
</dbReference>
<dbReference type="GO" id="GO:0090499">
    <property type="term" value="F:pimelyl-[acyl-carrier protein] methyl ester esterase activity"/>
    <property type="evidence" value="ECO:0007669"/>
    <property type="project" value="UniProtKB-EC"/>
</dbReference>
<dbReference type="GO" id="GO:0009102">
    <property type="term" value="P:biotin biosynthetic process"/>
    <property type="evidence" value="ECO:0007669"/>
    <property type="project" value="UniProtKB-UniRule"/>
</dbReference>
<dbReference type="FunFam" id="3.40.50.1820:FF:000523">
    <property type="entry name" value="Pimeloyl-[acyl-carrier protein] methyl ester esterase"/>
    <property type="match status" value="1"/>
</dbReference>
<dbReference type="Gene3D" id="3.40.50.1820">
    <property type="entry name" value="alpha/beta hydrolase"/>
    <property type="match status" value="1"/>
</dbReference>
<dbReference type="HAMAP" id="MF_01260">
    <property type="entry name" value="Carboxylester"/>
    <property type="match status" value="1"/>
</dbReference>
<dbReference type="InterPro" id="IPR000073">
    <property type="entry name" value="AB_hydrolase_1"/>
</dbReference>
<dbReference type="InterPro" id="IPR029058">
    <property type="entry name" value="AB_hydrolase_fold"/>
</dbReference>
<dbReference type="InterPro" id="IPR050266">
    <property type="entry name" value="AB_hydrolase_sf"/>
</dbReference>
<dbReference type="InterPro" id="IPR010076">
    <property type="entry name" value="BioH"/>
</dbReference>
<dbReference type="NCBIfam" id="TIGR01738">
    <property type="entry name" value="bioH"/>
    <property type="match status" value="1"/>
</dbReference>
<dbReference type="PANTHER" id="PTHR43798:SF31">
    <property type="entry name" value="AB HYDROLASE SUPERFAMILY PROTEIN YCLE"/>
    <property type="match status" value="1"/>
</dbReference>
<dbReference type="PANTHER" id="PTHR43798">
    <property type="entry name" value="MONOACYLGLYCEROL LIPASE"/>
    <property type="match status" value="1"/>
</dbReference>
<dbReference type="Pfam" id="PF00561">
    <property type="entry name" value="Abhydrolase_1"/>
    <property type="match status" value="1"/>
</dbReference>
<dbReference type="SUPFAM" id="SSF53474">
    <property type="entry name" value="alpha/beta-Hydrolases"/>
    <property type="match status" value="1"/>
</dbReference>
<keyword id="KW-0093">Biotin biosynthesis</keyword>
<keyword id="KW-0963">Cytoplasm</keyword>
<keyword id="KW-0378">Hydrolase</keyword>
<keyword id="KW-0719">Serine esterase</keyword>
<name>BIOH_NEIMH</name>
<gene>
    <name type="primary">bioH</name>
    <name type="ordered locus">NMBH4476_0264</name>
    <name type="ORF">NMH_0998</name>
</gene>
<comment type="function">
    <text evidence="1 3">The physiological role of BioH is to remove the methyl group introduced by BioC when the pimeloyl moiety is complete. It allows to synthesize pimeloyl-ACP via the fatty acid synthetic pathway through the hydrolysis of the ester bonds of pimeloyl-ACP esters (By similarity). Can form a complex with CoA, and may be involved in the condensation of CoA and pimelic acid into pimeloyl-CoA, a precursor in biotin biosynthesis.</text>
</comment>
<comment type="catalytic activity">
    <reaction>
        <text>6-carboxyhexanoyl-[ACP] methyl ester + H2O = 6-carboxyhexanoyl-[ACP] + methanol + H(+)</text>
        <dbReference type="Rhea" id="RHEA:42700"/>
        <dbReference type="Rhea" id="RHEA-COMP:9955"/>
        <dbReference type="Rhea" id="RHEA-COMP:10186"/>
        <dbReference type="ChEBI" id="CHEBI:15377"/>
        <dbReference type="ChEBI" id="CHEBI:15378"/>
        <dbReference type="ChEBI" id="CHEBI:17790"/>
        <dbReference type="ChEBI" id="CHEBI:78846"/>
        <dbReference type="ChEBI" id="CHEBI:82735"/>
        <dbReference type="EC" id="3.1.1.85"/>
    </reaction>
</comment>
<comment type="pathway">
    <text>Cofactor biosynthesis; biotin biosynthesis.</text>
</comment>
<comment type="subunit">
    <text evidence="3">Monomer.</text>
</comment>
<comment type="subcellular location">
    <subcellularLocation>
        <location evidence="1">Cytoplasm</location>
    </subcellularLocation>
</comment>
<comment type="similarity">
    <text evidence="4">Belongs to the AB hydrolase superfamily. Carboxylesterase BioH family.</text>
</comment>
<comment type="sequence caution" evidence="4">
    <conflict type="erroneous initiation">
        <sequence resource="EMBL-CDS" id="ADY94928"/>
    </conflict>
    <text>Truncated N-terminus.</text>
</comment>
<comment type="sequence caution" evidence="4">
    <conflict type="erroneous initiation">
        <sequence resource="EMBL-CDS" id="EFV64152"/>
    </conflict>
    <text>Truncated N-terminus.</text>
</comment>
<sequence length="258" mass="28208">MRRQRERKSMPDAVKKVYLIHGWGANRHMFDDLMPRLPATWPVSAVDLPGHGDAPFVRPFDIAAAADGIAAQIDAPADILGWSLGGLVALYLAARHPDKVRSLCLTASFARLTADEDYPEGLAAPALGKMVGAFRSDYAKHIKQFLQLQLLHTPDADGIIGRILPDLARCGTPQALQEALDAAERADARHLLDKIDVPVLLVFGGKDAITPPRMGEYLHRRLKGSRLVVMEKAAHAPFLSHAEAFAALYRDFVEGGLR</sequence>
<protein>
    <recommendedName>
        <fullName>Pimeloyl-[acyl-carrier protein] methyl ester esterase</fullName>
        <ecNumber>3.1.1.85</ecNumber>
    </recommendedName>
    <alternativeName>
        <fullName>Biotin synthesis protein BioH</fullName>
    </alternativeName>
    <alternativeName>
        <fullName>Carboxylesterase BioH</fullName>
    </alternativeName>
</protein>